<proteinExistence type="inferred from homology"/>
<protein>
    <recommendedName>
        <fullName evidence="1">Glycerol-3-phosphate acyltransferase</fullName>
    </recommendedName>
    <alternativeName>
        <fullName evidence="1">Acyl-PO4 G3P acyltransferase</fullName>
    </alternativeName>
    <alternativeName>
        <fullName evidence="1">Acyl-phosphate--glycerol-3-phosphate acyltransferase</fullName>
    </alternativeName>
    <alternativeName>
        <fullName evidence="1">G3P acyltransferase</fullName>
        <shortName evidence="1">GPAT</shortName>
        <ecNumber evidence="1">2.3.1.275</ecNumber>
    </alternativeName>
    <alternativeName>
        <fullName evidence="1">Lysophosphatidic acid synthase</fullName>
        <shortName evidence="1">LPA synthase</shortName>
    </alternativeName>
</protein>
<comment type="function">
    <text evidence="1">Catalyzes the transfer of an acyl group from acyl-phosphate (acyl-PO(4)) to glycerol-3-phosphate (G3P) to form lysophosphatidic acid (LPA). This enzyme utilizes acyl-phosphate as fatty acyl donor, but not acyl-CoA or acyl-ACP.</text>
</comment>
<comment type="catalytic activity">
    <reaction evidence="1">
        <text>an acyl phosphate + sn-glycerol 3-phosphate = a 1-acyl-sn-glycero-3-phosphate + phosphate</text>
        <dbReference type="Rhea" id="RHEA:34075"/>
        <dbReference type="ChEBI" id="CHEBI:43474"/>
        <dbReference type="ChEBI" id="CHEBI:57597"/>
        <dbReference type="ChEBI" id="CHEBI:57970"/>
        <dbReference type="ChEBI" id="CHEBI:59918"/>
        <dbReference type="EC" id="2.3.1.275"/>
    </reaction>
</comment>
<comment type="pathway">
    <text evidence="1">Lipid metabolism; phospholipid metabolism.</text>
</comment>
<comment type="subunit">
    <text evidence="1">Probably interacts with PlsX.</text>
</comment>
<comment type="subcellular location">
    <subcellularLocation>
        <location evidence="1">Cell inner membrane</location>
        <topology evidence="1">Multi-pass membrane protein</topology>
    </subcellularLocation>
</comment>
<comment type="similarity">
    <text evidence="1">Belongs to the PlsY family.</text>
</comment>
<dbReference type="EC" id="2.3.1.275" evidence="1"/>
<dbReference type="EMBL" id="AM286280">
    <property type="protein sequence ID" value="CAL09139.1"/>
    <property type="molecule type" value="Genomic_DNA"/>
</dbReference>
<dbReference type="RefSeq" id="WP_003021296.1">
    <property type="nucleotide sequence ID" value="NC_008245.1"/>
</dbReference>
<dbReference type="SMR" id="Q14H98"/>
<dbReference type="KEGG" id="ftf:FTF1123"/>
<dbReference type="HOGENOM" id="CLU_081254_0_2_6"/>
<dbReference type="UniPathway" id="UPA00085"/>
<dbReference type="GO" id="GO:0005886">
    <property type="term" value="C:plasma membrane"/>
    <property type="evidence" value="ECO:0007669"/>
    <property type="project" value="UniProtKB-SubCell"/>
</dbReference>
<dbReference type="GO" id="GO:0043772">
    <property type="term" value="F:acyl-phosphate glycerol-3-phosphate acyltransferase activity"/>
    <property type="evidence" value="ECO:0007669"/>
    <property type="project" value="UniProtKB-UniRule"/>
</dbReference>
<dbReference type="GO" id="GO:0008654">
    <property type="term" value="P:phospholipid biosynthetic process"/>
    <property type="evidence" value="ECO:0007669"/>
    <property type="project" value="UniProtKB-UniRule"/>
</dbReference>
<dbReference type="HAMAP" id="MF_01043">
    <property type="entry name" value="PlsY"/>
    <property type="match status" value="1"/>
</dbReference>
<dbReference type="InterPro" id="IPR003811">
    <property type="entry name" value="G3P_acylTferase_PlsY"/>
</dbReference>
<dbReference type="NCBIfam" id="TIGR00023">
    <property type="entry name" value="glycerol-3-phosphate 1-O-acyltransferase PlsY"/>
    <property type="match status" value="1"/>
</dbReference>
<dbReference type="PANTHER" id="PTHR30309:SF0">
    <property type="entry name" value="GLYCEROL-3-PHOSPHATE ACYLTRANSFERASE-RELATED"/>
    <property type="match status" value="1"/>
</dbReference>
<dbReference type="PANTHER" id="PTHR30309">
    <property type="entry name" value="INNER MEMBRANE PROTEIN YGIH"/>
    <property type="match status" value="1"/>
</dbReference>
<dbReference type="Pfam" id="PF02660">
    <property type="entry name" value="G3P_acyltransf"/>
    <property type="match status" value="1"/>
</dbReference>
<dbReference type="SMART" id="SM01207">
    <property type="entry name" value="G3P_acyltransf"/>
    <property type="match status" value="1"/>
</dbReference>
<evidence type="ECO:0000255" key="1">
    <source>
        <dbReference type="HAMAP-Rule" id="MF_01043"/>
    </source>
</evidence>
<name>PLSY_FRAT1</name>
<reference key="1">
    <citation type="journal article" date="2007" name="PLoS ONE">
        <title>Genome sequencing shows that European isolates of Francisella tularensis subspecies tularensis are almost identical to US laboratory strain Schu S4.</title>
        <authorList>
            <person name="Chaudhuri R.R."/>
            <person name="Ren C.-P."/>
            <person name="Desmond L."/>
            <person name="Vincent G.A."/>
            <person name="Silman N.J."/>
            <person name="Brehm J.K."/>
            <person name="Elmore M.J."/>
            <person name="Hudson M.J."/>
            <person name="Forsman M."/>
            <person name="Isherwood K.E."/>
            <person name="Gurycova D."/>
            <person name="Minton N.P."/>
            <person name="Titball R.W."/>
            <person name="Pallen M.J."/>
            <person name="Vipond R."/>
        </authorList>
    </citation>
    <scope>NUCLEOTIDE SEQUENCE [LARGE SCALE GENOMIC DNA]</scope>
    <source>
        <strain>FSC 198</strain>
    </source>
</reference>
<organism>
    <name type="scientific">Francisella tularensis subsp. tularensis (strain FSC 198)</name>
    <dbReference type="NCBI Taxonomy" id="393115"/>
    <lineage>
        <taxon>Bacteria</taxon>
        <taxon>Pseudomonadati</taxon>
        <taxon>Pseudomonadota</taxon>
        <taxon>Gammaproteobacteria</taxon>
        <taxon>Thiotrichales</taxon>
        <taxon>Francisellaceae</taxon>
        <taxon>Francisella</taxon>
    </lineage>
</organism>
<keyword id="KW-0997">Cell inner membrane</keyword>
<keyword id="KW-1003">Cell membrane</keyword>
<keyword id="KW-0444">Lipid biosynthesis</keyword>
<keyword id="KW-0443">Lipid metabolism</keyword>
<keyword id="KW-0472">Membrane</keyword>
<keyword id="KW-0594">Phospholipid biosynthesis</keyword>
<keyword id="KW-1208">Phospholipid metabolism</keyword>
<keyword id="KW-0808">Transferase</keyword>
<keyword id="KW-0812">Transmembrane</keyword>
<keyword id="KW-1133">Transmembrane helix</keyword>
<accession>Q14H98</accession>
<gene>
    <name evidence="1" type="primary">plsY</name>
    <name type="ordered locus">FTF1123</name>
</gene>
<sequence length="204" mass="21909">MNFLNFSILIFAYLLGSINSAIIVCYIFRLPSPRSVGSGNPGMTNVLRIGGKVPAAITLIFDILKGLVPVVIAKVLTGNEFITACTALYAILGHIFPIFFGFKGGKGVATLIGTLFGFSWILGLIFVITWLCVAIITRYSSLSALVATVIASFSVIFTSDLQVAAPFLIIAIIILVKHKGNIQRLISRQESKIGDKAKAKNDSN</sequence>
<feature type="chain" id="PRO_1000064176" description="Glycerol-3-phosphate acyltransferase">
    <location>
        <begin position="1"/>
        <end position="204"/>
    </location>
</feature>
<feature type="transmembrane region" description="Helical" evidence="1">
    <location>
        <begin position="8"/>
        <end position="28"/>
    </location>
</feature>
<feature type="transmembrane region" description="Helical" evidence="1">
    <location>
        <begin position="53"/>
        <end position="73"/>
    </location>
</feature>
<feature type="transmembrane region" description="Helical" evidence="1">
    <location>
        <begin position="81"/>
        <end position="101"/>
    </location>
</feature>
<feature type="transmembrane region" description="Helical" evidence="1">
    <location>
        <begin position="116"/>
        <end position="136"/>
    </location>
</feature>
<feature type="transmembrane region" description="Helical" evidence="1">
    <location>
        <begin position="155"/>
        <end position="175"/>
    </location>
</feature>